<evidence type="ECO:0000250" key="1">
    <source>
        <dbReference type="UniProtKB" id="B3FIW8"/>
    </source>
</evidence>
<evidence type="ECO:0000256" key="2">
    <source>
        <dbReference type="SAM" id="MobiDB-lite"/>
    </source>
</evidence>
<evidence type="ECO:0000269" key="3">
    <source>
    </source>
</evidence>
<evidence type="ECO:0000305" key="4"/>
<organismHost>
    <name type="scientific">Pseudomonas aeruginosa</name>
    <dbReference type="NCBI Taxonomy" id="287"/>
</organismHost>
<comment type="function">
    <text evidence="1 3">Self-assembles to form a proteinaceous shell that encloses the viral DNA and compartmentalizes proteins and DNA during viral infection (PubMed:28813669). This micrometer-scale compartment contains narrow pores and is the site of viral replication, with the proteins involved in DNA replication localized inside (By similarity). Provides a surface for docking of capsids during packaging (PubMed:28813669). Probably protects the viral genome against host defenses (By similarity).</text>
</comment>
<comment type="subunit">
    <text evidence="1">Homotetramer (By similarity). The tetrameric protomers further assemble as a square grid (By similarity).</text>
</comment>
<comment type="subcellular location">
    <subcellularLocation>
        <location evidence="3">Host cytoplasm</location>
    </subcellularLocation>
    <text evidence="3">In infected host cells assembles as a nucleus-like structure in the host cytoplasm.</text>
</comment>
<comment type="similarity">
    <text evidence="4">Belongs to the Phikzvirus chimallin family.</text>
</comment>
<gene>
    <name type="ORF">053</name>
</gene>
<proteinExistence type="evidence at protein level"/>
<dbReference type="EMBL" id="HQ630627">
    <property type="protein sequence ID" value="AEH03480.1"/>
    <property type="molecule type" value="Genomic_DNA"/>
</dbReference>
<dbReference type="RefSeq" id="YP_009217136.1">
    <property type="nucleotide sequence ID" value="NC_028999.1"/>
</dbReference>
<dbReference type="PDB" id="8FNE">
    <property type="method" value="EM"/>
    <property type="resolution" value="3.90 A"/>
    <property type="chains" value="A/B/C/D/E/F/G/H=1-602"/>
</dbReference>
<dbReference type="PDB" id="8FV5">
    <property type="method" value="EM"/>
    <property type="resolution" value="4.21 A"/>
    <property type="chains" value="A/B/C/D/E/F/G/H/I/J/K/L/M/N/O/P/Q/R/S/T/U/V/W/X/Y/Z/a/b/c/d=1-602"/>
</dbReference>
<dbReference type="PDBsum" id="8FNE"/>
<dbReference type="PDBsum" id="8FV5"/>
<dbReference type="EMDB" id="EMD-29310"/>
<dbReference type="SMR" id="F8SJT5"/>
<dbReference type="GeneID" id="26643584"/>
<dbReference type="KEGG" id="vg:26643584"/>
<dbReference type="OrthoDB" id="9270at10239"/>
<dbReference type="Proteomes" id="UP000008388">
    <property type="component" value="Segment"/>
</dbReference>
<dbReference type="GO" id="GO:0030430">
    <property type="term" value="C:host cell cytoplasm"/>
    <property type="evidence" value="ECO:0007669"/>
    <property type="project" value="UniProtKB-SubCell"/>
</dbReference>
<name>CHMA_BPPA3</name>
<reference key="1">
    <citation type="journal article" date="2011" name="Microbiology">
        <title>The Pseudomonas aeruginosa generalized transducing phage phiPA3 is a new member of the phiKZ-like group of 'jumbo' phages, and infects model laboratory strains and clinical isolates from cystic fibrosis patients.</title>
        <authorList>
            <person name="Monson R."/>
            <person name="Foulds I."/>
            <person name="Foweraker J."/>
            <person name="Welch M."/>
            <person name="Salmond G.P."/>
        </authorList>
    </citation>
    <scope>NUCLEOTIDE SEQUENCE [GENOMIC DNA]</scope>
</reference>
<reference key="2">
    <citation type="journal article" date="2017" name="Cell Rep.">
        <title>The Phage Nucleus and Tubulin Spindle Are Conserved among Large Pseudomonas Phages.</title>
        <authorList>
            <person name="Chaikeeratisak V."/>
            <person name="Nguyen K."/>
            <person name="Egan M.E."/>
            <person name="Erb M.L."/>
            <person name="Vavilina A."/>
            <person name="Pogliano J."/>
        </authorList>
    </citation>
    <scope>FUNCTION</scope>
    <scope>SUBCELLULAR LOCATION</scope>
</reference>
<organism>
    <name type="scientific">Pseudomonas phage PhiPA3</name>
    <name type="common">Pseudomonas aeruginosa phage PhiPA3</name>
    <dbReference type="NCBI Taxonomy" id="998086"/>
    <lineage>
        <taxon>Viruses</taxon>
        <taxon>Duplodnaviria</taxon>
        <taxon>Heunggongvirae</taxon>
        <taxon>Uroviricota</taxon>
        <taxon>Caudoviricetes</taxon>
        <taxon>Miltoncavirus</taxon>
        <taxon>Miltoncavirus PhiPA3</taxon>
    </lineage>
</organism>
<keyword id="KW-0002">3D-structure</keyword>
<keyword id="KW-1035">Host cytoplasm</keyword>
<keyword id="KW-1185">Reference proteome</keyword>
<accession>F8SJT5</accession>
<sequence>MQQTQQGPKVQTQTLQGGAGNLNSIFQRSGRTDGGDARASEALAVFNKLKEEAIAQQDLHDDFLVFRFDRDQNRVGYSALLVVKRAAINGQQVIVTRPLVMPNDQITLPTKKLTIQNGMHQETIEAEADVQDVFTTQYWNRICDSIRQQTGKHDAMVINAGPTVIPADFDLKDELVLKQLLIKSVNLCDDMLAKRSGEQPFSVAMLKGTDETLAARLNFTGKPMHDSLGYPIRSDILVSLNRVKKPGQQENEFYEAEDKLNQVSCFVNLEYTPQPQQAIYGAPQQTQQLPPLTPAIVITDVRQAEWLKANTMELYLFALSNAFRVTANQSWARSLLPQLGKVKDMRDIGAIGYLSRLAARVETKTETFTDQNFAELLYNMVRPSPVFMSDLNRFGDNAAIENVFIDALGGVNQQRAVAAIIAGVNNLIGGGFEKFFDHNTMPIIQPYGTDIQLGYYLDGEGEKQDRRDLDVLGALNASDGNIQEWMSWYGTQCNVAVHPELRARQSKNFDRQYLGNSVTYTTRAHRGIWNPKFIEALDKAIASVGLTVAMDNVAQVFGAQRFSGNLAIADYAVTGTAQVSSGLVSNGGYNPQFGVGQGSGFY</sequence>
<protein>
    <recommendedName>
        <fullName evidence="1">Chimallin</fullName>
        <shortName evidence="1">ChmA</shortName>
    </recommendedName>
    <alternativeName>
        <fullName evidence="4">Phage nucleus enclosure protein</fullName>
        <shortName evidence="4">PhuN</shortName>
    </alternativeName>
    <alternativeName>
        <fullName evidence="4">gene product 53</fullName>
        <shortName>gp53</shortName>
    </alternativeName>
</protein>
<feature type="chain" id="PRO_0000448592" description="Chimallin">
    <location>
        <begin position="1"/>
        <end position="602"/>
    </location>
</feature>
<feature type="region of interest" description="Disordered" evidence="2">
    <location>
        <begin position="1"/>
        <end position="33"/>
    </location>
</feature>
<feature type="compositionally biased region" description="Low complexity" evidence="2">
    <location>
        <begin position="1"/>
        <end position="14"/>
    </location>
</feature>